<accession>Q03956</accession>
<accession>D6VSI4</accession>
<gene>
    <name type="primary">RAV2</name>
    <name type="ordered locus">YDR202C</name>
    <name type="ORF">YD9346.12C</name>
</gene>
<organism>
    <name type="scientific">Saccharomyces cerevisiae (strain ATCC 204508 / S288c)</name>
    <name type="common">Baker's yeast</name>
    <dbReference type="NCBI Taxonomy" id="559292"/>
    <lineage>
        <taxon>Eukaryota</taxon>
        <taxon>Fungi</taxon>
        <taxon>Dikarya</taxon>
        <taxon>Ascomycota</taxon>
        <taxon>Saccharomycotina</taxon>
        <taxon>Saccharomycetes</taxon>
        <taxon>Saccharomycetales</taxon>
        <taxon>Saccharomycetaceae</taxon>
        <taxon>Saccharomyces</taxon>
    </lineage>
</organism>
<evidence type="ECO:0000269" key="1">
    <source>
    </source>
</evidence>
<evidence type="ECO:0000269" key="2">
    <source>
    </source>
</evidence>
<evidence type="ECO:0000269" key="3">
    <source>
    </source>
</evidence>
<evidence type="ECO:0000305" key="4"/>
<name>RAV2_YEAST</name>
<protein>
    <recommendedName>
        <fullName>Regulator of V-ATPase in vacuolar membrane protein 2</fullName>
    </recommendedName>
</protein>
<proteinExistence type="evidence at protein level"/>
<sequence length="351" mass="40017">MSVDLFPNDRFGAEDKYDNFKDAVKECSWLIEEIVKPQLPNIIDNFSKCLEMLESDQIFKMPVSNGIPNESNKQNDSPTVKGVITRQGQYIVDFHIVVRFPQFQRGKQVMFRMNTGLNFLLIQFSKIMTHLKNILEILNQLQVATDVSEFVSKFGVAMELLNHSLILLQNPPRDLVFPEDNNFAMKEMFQDCYSVCESTAHILGLELTLCRNELCIELRNLIKVTKKPWCEIDSKTGRSFCDQIRNQVTNERNKTLSKILSENGVQVQDSTLLNHIISSFQSEAITLPEAQELLRRGVTFDNRVVMECEKLIVSTSDPTLISISAKLNSLKASMANHQANLVASKQLSTYK</sequence>
<reference key="1">
    <citation type="journal article" date="1997" name="Nature">
        <title>The nucleotide sequence of Saccharomyces cerevisiae chromosome IV.</title>
        <authorList>
            <person name="Jacq C."/>
            <person name="Alt-Moerbe J."/>
            <person name="Andre B."/>
            <person name="Arnold W."/>
            <person name="Bahr A."/>
            <person name="Ballesta J.P.G."/>
            <person name="Bargues M."/>
            <person name="Baron L."/>
            <person name="Becker A."/>
            <person name="Biteau N."/>
            <person name="Bloecker H."/>
            <person name="Blugeon C."/>
            <person name="Boskovic J."/>
            <person name="Brandt P."/>
            <person name="Brueckner M."/>
            <person name="Buitrago M.J."/>
            <person name="Coster F."/>
            <person name="Delaveau T."/>
            <person name="del Rey F."/>
            <person name="Dujon B."/>
            <person name="Eide L.G."/>
            <person name="Garcia-Cantalejo J.M."/>
            <person name="Goffeau A."/>
            <person name="Gomez-Peris A."/>
            <person name="Granotier C."/>
            <person name="Hanemann V."/>
            <person name="Hankeln T."/>
            <person name="Hoheisel J.D."/>
            <person name="Jaeger W."/>
            <person name="Jimenez A."/>
            <person name="Jonniaux J.-L."/>
            <person name="Kraemer C."/>
            <person name="Kuester H."/>
            <person name="Laamanen P."/>
            <person name="Legros Y."/>
            <person name="Louis E.J."/>
            <person name="Moeller-Rieker S."/>
            <person name="Monnet A."/>
            <person name="Moro M."/>
            <person name="Mueller-Auer S."/>
            <person name="Nussbaumer B."/>
            <person name="Paricio N."/>
            <person name="Paulin L."/>
            <person name="Perea J."/>
            <person name="Perez-Alonso M."/>
            <person name="Perez-Ortin J.E."/>
            <person name="Pohl T.M."/>
            <person name="Prydz H."/>
            <person name="Purnelle B."/>
            <person name="Rasmussen S.W."/>
            <person name="Remacha M.A."/>
            <person name="Revuelta J.L."/>
            <person name="Rieger M."/>
            <person name="Salom D."/>
            <person name="Saluz H.P."/>
            <person name="Saiz J.E."/>
            <person name="Saren A.-M."/>
            <person name="Schaefer M."/>
            <person name="Scharfe M."/>
            <person name="Schmidt E.R."/>
            <person name="Schneider C."/>
            <person name="Scholler P."/>
            <person name="Schwarz S."/>
            <person name="Soler-Mira A."/>
            <person name="Urrestarazu L.A."/>
            <person name="Verhasselt P."/>
            <person name="Vissers S."/>
            <person name="Voet M."/>
            <person name="Volckaert G."/>
            <person name="Wagner G."/>
            <person name="Wambutt R."/>
            <person name="Wedler E."/>
            <person name="Wedler H."/>
            <person name="Woelfl S."/>
            <person name="Harris D.E."/>
            <person name="Bowman S."/>
            <person name="Brown D."/>
            <person name="Churcher C.M."/>
            <person name="Connor R."/>
            <person name="Dedman K."/>
            <person name="Gentles S."/>
            <person name="Hamlin N."/>
            <person name="Hunt S."/>
            <person name="Jones L."/>
            <person name="McDonald S."/>
            <person name="Murphy L.D."/>
            <person name="Niblett D."/>
            <person name="Odell C."/>
            <person name="Oliver K."/>
            <person name="Rajandream M.A."/>
            <person name="Richards C."/>
            <person name="Shore L."/>
            <person name="Walsh S.V."/>
            <person name="Barrell B.G."/>
            <person name="Dietrich F.S."/>
            <person name="Mulligan J.T."/>
            <person name="Allen E."/>
            <person name="Araujo R."/>
            <person name="Aviles E."/>
            <person name="Berno A."/>
            <person name="Carpenter J."/>
            <person name="Chen E."/>
            <person name="Cherry J.M."/>
            <person name="Chung E."/>
            <person name="Duncan M."/>
            <person name="Hunicke-Smith S."/>
            <person name="Hyman R.W."/>
            <person name="Komp C."/>
            <person name="Lashkari D."/>
            <person name="Lew H."/>
            <person name="Lin D."/>
            <person name="Mosedale D."/>
            <person name="Nakahara K."/>
            <person name="Namath A."/>
            <person name="Oefner P."/>
            <person name="Oh C."/>
            <person name="Petel F.X."/>
            <person name="Roberts D."/>
            <person name="Schramm S."/>
            <person name="Schroeder M."/>
            <person name="Shogren T."/>
            <person name="Shroff N."/>
            <person name="Winant A."/>
            <person name="Yelton M.A."/>
            <person name="Botstein D."/>
            <person name="Davis R.W."/>
            <person name="Johnston M."/>
            <person name="Andrews S."/>
            <person name="Brinkman R."/>
            <person name="Cooper J."/>
            <person name="Ding H."/>
            <person name="Du Z."/>
            <person name="Favello A."/>
            <person name="Fulton L."/>
            <person name="Gattung S."/>
            <person name="Greco T."/>
            <person name="Hallsworth K."/>
            <person name="Hawkins J."/>
            <person name="Hillier L.W."/>
            <person name="Jier M."/>
            <person name="Johnson D."/>
            <person name="Johnston L."/>
            <person name="Kirsten J."/>
            <person name="Kucaba T."/>
            <person name="Langston Y."/>
            <person name="Latreille P."/>
            <person name="Le T."/>
            <person name="Mardis E."/>
            <person name="Menezes S."/>
            <person name="Miller N."/>
            <person name="Nhan M."/>
            <person name="Pauley A."/>
            <person name="Peluso D."/>
            <person name="Rifkin L."/>
            <person name="Riles L."/>
            <person name="Taich A."/>
            <person name="Trevaskis E."/>
            <person name="Vignati D."/>
            <person name="Wilcox L."/>
            <person name="Wohldman P."/>
            <person name="Vaudin M."/>
            <person name="Wilson R."/>
            <person name="Waterston R."/>
            <person name="Albermann K."/>
            <person name="Hani J."/>
            <person name="Heumann K."/>
            <person name="Kleine K."/>
            <person name="Mewes H.-W."/>
            <person name="Zollner A."/>
            <person name="Zaccaria P."/>
        </authorList>
    </citation>
    <scope>NUCLEOTIDE SEQUENCE [LARGE SCALE GENOMIC DNA]</scope>
    <source>
        <strain>ATCC 204508 / S288c</strain>
    </source>
</reference>
<reference key="2">
    <citation type="journal article" date="2014" name="G3 (Bethesda)">
        <title>The reference genome sequence of Saccharomyces cerevisiae: Then and now.</title>
        <authorList>
            <person name="Engel S.R."/>
            <person name="Dietrich F.S."/>
            <person name="Fisk D.G."/>
            <person name="Binkley G."/>
            <person name="Balakrishnan R."/>
            <person name="Costanzo M.C."/>
            <person name="Dwight S.S."/>
            <person name="Hitz B.C."/>
            <person name="Karra K."/>
            <person name="Nash R.S."/>
            <person name="Weng S."/>
            <person name="Wong E.D."/>
            <person name="Lloyd P."/>
            <person name="Skrzypek M.S."/>
            <person name="Miyasato S.R."/>
            <person name="Simison M."/>
            <person name="Cherry J.M."/>
        </authorList>
    </citation>
    <scope>GENOME REANNOTATION</scope>
    <source>
        <strain>ATCC 204508 / S288c</strain>
    </source>
</reference>
<reference key="3">
    <citation type="journal article" date="2007" name="Genome Res.">
        <title>Approaching a complete repository of sequence-verified protein-encoding clones for Saccharomyces cerevisiae.</title>
        <authorList>
            <person name="Hu Y."/>
            <person name="Rolfs A."/>
            <person name="Bhullar B."/>
            <person name="Murthy T.V.S."/>
            <person name="Zhu C."/>
            <person name="Berger M.F."/>
            <person name="Camargo A.A."/>
            <person name="Kelley F."/>
            <person name="McCarron S."/>
            <person name="Jepson D."/>
            <person name="Richardson A."/>
            <person name="Raphael J."/>
            <person name="Moreira D."/>
            <person name="Taycher E."/>
            <person name="Zuo D."/>
            <person name="Mohr S."/>
            <person name="Kane M.F."/>
            <person name="Williamson J."/>
            <person name="Simpson A.J.G."/>
            <person name="Bulyk M.L."/>
            <person name="Harlow E."/>
            <person name="Marsischky G."/>
            <person name="Kolodner R.D."/>
            <person name="LaBaer J."/>
        </authorList>
    </citation>
    <scope>NUCLEOTIDE SEQUENCE [GENOMIC DNA]</scope>
    <source>
        <strain>ATCC 204508 / S288c</strain>
    </source>
</reference>
<reference key="4">
    <citation type="journal article" date="2001" name="Nat. Cell Biol.">
        <title>Skp1 forms multiple protein complexes, including RAVE, a regulator of V-ATPase assembly.</title>
        <authorList>
            <person name="Seol J.H."/>
            <person name="Shevchenko A."/>
            <person name="Shevchenko A."/>
            <person name="Deshaies R.J."/>
        </authorList>
    </citation>
    <scope>FUNCTION</scope>
    <scope>IDENTIFICATION IN THE RAVE COMPLEX WITH RAV1 AND CBF3D</scope>
    <scope>INTERACTION WITH RAV1; CBF3D; VMA1; VMA2; VMA4 AND VMA8</scope>
</reference>
<reference key="5">
    <citation type="journal article" date="2002" name="J. Biol. Chem.">
        <title>The RAVE complex is essential for stable assembly of the yeast V-ATPase.</title>
        <authorList>
            <person name="Smardon A.M."/>
            <person name="Tarsio M."/>
            <person name="Kane P.M."/>
        </authorList>
    </citation>
    <scope>FUNCTION OF THE RAVE COMPLEX</scope>
</reference>
<reference key="6">
    <citation type="journal article" date="2003" name="Nature">
        <title>Global analysis of protein expression in yeast.</title>
        <authorList>
            <person name="Ghaemmaghami S."/>
            <person name="Huh W.-K."/>
            <person name="Bower K."/>
            <person name="Howson R.W."/>
            <person name="Belle A."/>
            <person name="Dephoure N."/>
            <person name="O'Shea E.K."/>
            <person name="Weissman J.S."/>
        </authorList>
    </citation>
    <scope>LEVEL OF PROTEIN EXPRESSION [LARGE SCALE ANALYSIS]</scope>
</reference>
<keyword id="KW-0002">3D-structure</keyword>
<keyword id="KW-0963">Cytoplasm</keyword>
<keyword id="KW-0967">Endosome</keyword>
<keyword id="KW-0472">Membrane</keyword>
<keyword id="KW-0653">Protein transport</keyword>
<keyword id="KW-1185">Reference proteome</keyword>
<keyword id="KW-0813">Transport</keyword>
<comment type="function">
    <text evidence="1 2">Component of the RAVE complex, which is required for stable assembly of the vacuolar ATPase complex V-ATPase under many conditions. May be required for transport between the early endosome and the late endosome/prevacuolar compartment (PVC).</text>
</comment>
<comment type="subunit">
    <text evidence="1">Component of the RAVE complex composed of RAV1, RAV2 and CBF3D/SKP1. Within the complex, it interacts directly with RAV1 and CBF3D. Interacts with the V-ATPase V1 subunits VMA1, VMA2 and VMA8.</text>
</comment>
<comment type="interaction">
    <interactant intactId="EBI-30629">
        <id>Q03956</id>
    </interactant>
    <interactant intactId="EBI-25471">
        <id>P47104</id>
        <label>RAV1</label>
    </interactant>
    <organismsDiffer>false</organismsDiffer>
    <experiments>4</experiments>
</comment>
<comment type="interaction">
    <interactant intactId="EBI-30629">
        <id>Q03956</id>
    </interactant>
    <interactant intactId="EBI-20254">
        <id>P16140</id>
        <label>VMA2</label>
    </interactant>
    <organismsDiffer>false</organismsDiffer>
    <experiments>2</experiments>
</comment>
<comment type="subcellular location">
    <subcellularLocation>
        <location evidence="4">Cytoplasm</location>
    </subcellularLocation>
    <subcellularLocation>
        <location evidence="4">Early endosome membrane</location>
        <topology evidence="4">Peripheral membrane protein</topology>
        <orientation evidence="4">Cytoplasmic side</orientation>
    </subcellularLocation>
    <text>May be membrane-associated and localize to early endosomes via its interaction with RAV1.</text>
</comment>
<comment type="miscellaneous">
    <text evidence="3">Present with 2860 molecules/cell in log phase SD medium.</text>
</comment>
<dbReference type="EMBL" id="Z48784">
    <property type="protein sequence ID" value="CAA88714.1"/>
    <property type="molecule type" value="Genomic_DNA"/>
</dbReference>
<dbReference type="EMBL" id="AY557695">
    <property type="protein sequence ID" value="AAS56021.1"/>
    <property type="molecule type" value="Genomic_DNA"/>
</dbReference>
<dbReference type="EMBL" id="BK006938">
    <property type="protein sequence ID" value="DAA12044.1"/>
    <property type="molecule type" value="Genomic_DNA"/>
</dbReference>
<dbReference type="PIR" id="S52708">
    <property type="entry name" value="S52708"/>
</dbReference>
<dbReference type="RefSeq" id="NP_010488.1">
    <property type="nucleotide sequence ID" value="NM_001180510.1"/>
</dbReference>
<dbReference type="PDB" id="9COP">
    <property type="method" value="EM"/>
    <property type="resolution" value="2.70 A"/>
    <property type="chains" value="y=1-351"/>
</dbReference>
<dbReference type="PDBsum" id="9COP"/>
<dbReference type="EMDB" id="EMD-45788"/>
<dbReference type="SMR" id="Q03956"/>
<dbReference type="BioGRID" id="32253">
    <property type="interactions" value="193"/>
</dbReference>
<dbReference type="ComplexPortal" id="CPX-1627">
    <property type="entry name" value="RAVE complex"/>
</dbReference>
<dbReference type="DIP" id="DIP-8529N"/>
<dbReference type="FunCoup" id="Q03956">
    <property type="interactions" value="96"/>
</dbReference>
<dbReference type="IntAct" id="Q03956">
    <property type="interactions" value="14"/>
</dbReference>
<dbReference type="MINT" id="Q03956"/>
<dbReference type="STRING" id="4932.YDR202C"/>
<dbReference type="iPTMnet" id="Q03956"/>
<dbReference type="PaxDb" id="4932-YDR202C"/>
<dbReference type="PeptideAtlas" id="Q03956"/>
<dbReference type="EnsemblFungi" id="YDR202C_mRNA">
    <property type="protein sequence ID" value="YDR202C"/>
    <property type="gene ID" value="YDR202C"/>
</dbReference>
<dbReference type="GeneID" id="851784"/>
<dbReference type="KEGG" id="sce:YDR202C"/>
<dbReference type="AGR" id="SGD:S000002610"/>
<dbReference type="SGD" id="S000002610">
    <property type="gene designation" value="RAV2"/>
</dbReference>
<dbReference type="VEuPathDB" id="FungiDB:YDR202C"/>
<dbReference type="eggNOG" id="ENOG502RBKJ">
    <property type="taxonomic scope" value="Eukaryota"/>
</dbReference>
<dbReference type="HOGENOM" id="CLU_813985_0_0_1"/>
<dbReference type="InParanoid" id="Q03956"/>
<dbReference type="OMA" id="ITRCITY"/>
<dbReference type="OrthoDB" id="66510at2759"/>
<dbReference type="BioCyc" id="YEAST:G3O-29787-MONOMER"/>
<dbReference type="BioGRID-ORCS" id="851784">
    <property type="hits" value="4 hits in 10 CRISPR screens"/>
</dbReference>
<dbReference type="PRO" id="PR:Q03956"/>
<dbReference type="Proteomes" id="UP000002311">
    <property type="component" value="Chromosome IV"/>
</dbReference>
<dbReference type="RNAct" id="Q03956">
    <property type="molecule type" value="protein"/>
</dbReference>
<dbReference type="GO" id="GO:0031901">
    <property type="term" value="C:early endosome membrane"/>
    <property type="evidence" value="ECO:0007669"/>
    <property type="project" value="UniProtKB-SubCell"/>
</dbReference>
<dbReference type="GO" id="GO:0012505">
    <property type="term" value="C:endomembrane system"/>
    <property type="evidence" value="ECO:0000303"/>
    <property type="project" value="ComplexPortal"/>
</dbReference>
<dbReference type="GO" id="GO:0043291">
    <property type="term" value="C:RAVE complex"/>
    <property type="evidence" value="ECO:0000353"/>
    <property type="project" value="ComplexPortal"/>
</dbReference>
<dbReference type="GO" id="GO:0015031">
    <property type="term" value="P:protein transport"/>
    <property type="evidence" value="ECO:0007669"/>
    <property type="project" value="UniProtKB-KW"/>
</dbReference>
<dbReference type="GO" id="GO:0043254">
    <property type="term" value="P:regulation of protein-containing complex assembly"/>
    <property type="evidence" value="ECO:0000315"/>
    <property type="project" value="SGD"/>
</dbReference>
<dbReference type="GO" id="GO:0007035">
    <property type="term" value="P:vacuolar acidification"/>
    <property type="evidence" value="ECO:0000315"/>
    <property type="project" value="SGD"/>
</dbReference>
<dbReference type="GO" id="GO:0070072">
    <property type="term" value="P:vacuolar proton-transporting V-type ATPase complex assembly"/>
    <property type="evidence" value="ECO:0000314"/>
    <property type="project" value="ComplexPortal"/>
</dbReference>
<dbReference type="InterPro" id="IPR028241">
    <property type="entry name" value="RAVE2/Rogdi"/>
</dbReference>
<dbReference type="PANTHER" id="PTHR13618">
    <property type="entry name" value="LEUCINE ZIPPER CONTAINING TRANSCRIPTION FACTOR LZF1"/>
    <property type="match status" value="1"/>
</dbReference>
<dbReference type="PANTHER" id="PTHR13618:SF1">
    <property type="entry name" value="PROTEIN ROGDI HOMOLOG"/>
    <property type="match status" value="1"/>
</dbReference>
<dbReference type="Pfam" id="PF10259">
    <property type="entry name" value="Rogdi_lz"/>
    <property type="match status" value="1"/>
</dbReference>
<feature type="chain" id="PRO_0000097175" description="Regulator of V-ATPase in vacuolar membrane protein 2">
    <location>
        <begin position="1"/>
        <end position="351"/>
    </location>
</feature>